<reference key="1">
    <citation type="journal article" date="2010" name="J. Bacteriol.">
        <title>The genetic basis of laboratory adaptation in Caulobacter crescentus.</title>
        <authorList>
            <person name="Marks M.E."/>
            <person name="Castro-Rojas C.M."/>
            <person name="Teiling C."/>
            <person name="Du L."/>
            <person name="Kapatral V."/>
            <person name="Walunas T.L."/>
            <person name="Crosson S."/>
        </authorList>
    </citation>
    <scope>NUCLEOTIDE SEQUENCE [LARGE SCALE GENOMIC DNA]</scope>
    <source>
        <strain>NA1000 / CB15N</strain>
    </source>
</reference>
<gene>
    <name evidence="1" type="primary">aroA</name>
    <name type="ordered locus">CCNA_03704</name>
</gene>
<feature type="chain" id="PRO_1000124676" description="3-phosphoshikimate 1-carboxyvinyltransferase">
    <location>
        <begin position="1"/>
        <end position="443"/>
    </location>
</feature>
<feature type="active site" description="Proton acceptor" evidence="1">
    <location>
        <position position="323"/>
    </location>
</feature>
<feature type="binding site" evidence="1">
    <location>
        <position position="24"/>
    </location>
    <ligand>
        <name>3-phosphoshikimate</name>
        <dbReference type="ChEBI" id="CHEBI:145989"/>
    </ligand>
</feature>
<feature type="binding site" evidence="1">
    <location>
        <position position="24"/>
    </location>
    <ligand>
        <name>phosphoenolpyruvate</name>
        <dbReference type="ChEBI" id="CHEBI:58702"/>
    </ligand>
</feature>
<feature type="binding site" evidence="1">
    <location>
        <position position="25"/>
    </location>
    <ligand>
        <name>3-phosphoshikimate</name>
        <dbReference type="ChEBI" id="CHEBI:145989"/>
    </ligand>
</feature>
<feature type="binding site" evidence="1">
    <location>
        <position position="29"/>
    </location>
    <ligand>
        <name>3-phosphoshikimate</name>
        <dbReference type="ChEBI" id="CHEBI:145989"/>
    </ligand>
</feature>
<feature type="binding site" evidence="1">
    <location>
        <position position="95"/>
    </location>
    <ligand>
        <name>phosphoenolpyruvate</name>
        <dbReference type="ChEBI" id="CHEBI:58702"/>
    </ligand>
</feature>
<feature type="binding site" evidence="1">
    <location>
        <position position="123"/>
    </location>
    <ligand>
        <name>phosphoenolpyruvate</name>
        <dbReference type="ChEBI" id="CHEBI:58702"/>
    </ligand>
</feature>
<feature type="binding site" evidence="1">
    <location>
        <position position="167"/>
    </location>
    <ligand>
        <name>3-phosphoshikimate</name>
        <dbReference type="ChEBI" id="CHEBI:145989"/>
    </ligand>
</feature>
<feature type="binding site" evidence="1">
    <location>
        <position position="169"/>
    </location>
    <ligand>
        <name>3-phosphoshikimate</name>
        <dbReference type="ChEBI" id="CHEBI:145989"/>
    </ligand>
</feature>
<feature type="binding site" evidence="1">
    <location>
        <position position="169"/>
    </location>
    <ligand>
        <name>phosphoenolpyruvate</name>
        <dbReference type="ChEBI" id="CHEBI:58702"/>
    </ligand>
</feature>
<feature type="binding site" evidence="1">
    <location>
        <position position="323"/>
    </location>
    <ligand>
        <name>3-phosphoshikimate</name>
        <dbReference type="ChEBI" id="CHEBI:145989"/>
    </ligand>
</feature>
<feature type="binding site" evidence="1">
    <location>
        <position position="350"/>
    </location>
    <ligand>
        <name>3-phosphoshikimate</name>
        <dbReference type="ChEBI" id="CHEBI:145989"/>
    </ligand>
</feature>
<feature type="binding site" evidence="1">
    <location>
        <position position="354"/>
    </location>
    <ligand>
        <name>phosphoenolpyruvate</name>
        <dbReference type="ChEBI" id="CHEBI:58702"/>
    </ligand>
</feature>
<feature type="binding site" evidence="1">
    <location>
        <position position="398"/>
    </location>
    <ligand>
        <name>phosphoenolpyruvate</name>
        <dbReference type="ChEBI" id="CHEBI:58702"/>
    </ligand>
</feature>
<accession>B8H6A8</accession>
<dbReference type="EC" id="2.5.1.19" evidence="1"/>
<dbReference type="EMBL" id="CP001340">
    <property type="protein sequence ID" value="ACL97169.1"/>
    <property type="molecule type" value="Genomic_DNA"/>
</dbReference>
<dbReference type="RefSeq" id="WP_010921418.1">
    <property type="nucleotide sequence ID" value="NC_011916.1"/>
</dbReference>
<dbReference type="RefSeq" id="YP_002519077.1">
    <property type="nucleotide sequence ID" value="NC_011916.1"/>
</dbReference>
<dbReference type="SMR" id="B8H6A8"/>
<dbReference type="GeneID" id="7331898"/>
<dbReference type="KEGG" id="ccs:CCNA_03704"/>
<dbReference type="PATRIC" id="fig|565050.3.peg.3611"/>
<dbReference type="HOGENOM" id="CLU_024321_0_1_5"/>
<dbReference type="OrthoDB" id="9809920at2"/>
<dbReference type="PhylomeDB" id="B8H6A8"/>
<dbReference type="UniPathway" id="UPA00053">
    <property type="reaction ID" value="UER00089"/>
</dbReference>
<dbReference type="Proteomes" id="UP000001364">
    <property type="component" value="Chromosome"/>
</dbReference>
<dbReference type="GO" id="GO:0005737">
    <property type="term" value="C:cytoplasm"/>
    <property type="evidence" value="ECO:0007669"/>
    <property type="project" value="UniProtKB-SubCell"/>
</dbReference>
<dbReference type="GO" id="GO:0003866">
    <property type="term" value="F:3-phosphoshikimate 1-carboxyvinyltransferase activity"/>
    <property type="evidence" value="ECO:0007669"/>
    <property type="project" value="UniProtKB-UniRule"/>
</dbReference>
<dbReference type="GO" id="GO:0008652">
    <property type="term" value="P:amino acid biosynthetic process"/>
    <property type="evidence" value="ECO:0007669"/>
    <property type="project" value="UniProtKB-KW"/>
</dbReference>
<dbReference type="GO" id="GO:0009073">
    <property type="term" value="P:aromatic amino acid family biosynthetic process"/>
    <property type="evidence" value="ECO:0007669"/>
    <property type="project" value="UniProtKB-KW"/>
</dbReference>
<dbReference type="GO" id="GO:0009423">
    <property type="term" value="P:chorismate biosynthetic process"/>
    <property type="evidence" value="ECO:0007669"/>
    <property type="project" value="UniProtKB-UniRule"/>
</dbReference>
<dbReference type="CDD" id="cd01556">
    <property type="entry name" value="EPSP_synthase"/>
    <property type="match status" value="1"/>
</dbReference>
<dbReference type="FunFam" id="3.65.10.10:FF:000005">
    <property type="entry name" value="3-phosphoshikimate 1-carboxyvinyltransferase"/>
    <property type="match status" value="1"/>
</dbReference>
<dbReference type="Gene3D" id="3.65.10.10">
    <property type="entry name" value="Enolpyruvate transferase domain"/>
    <property type="match status" value="2"/>
</dbReference>
<dbReference type="HAMAP" id="MF_00210">
    <property type="entry name" value="EPSP_synth"/>
    <property type="match status" value="1"/>
</dbReference>
<dbReference type="InterPro" id="IPR001986">
    <property type="entry name" value="Enolpyruvate_Tfrase_dom"/>
</dbReference>
<dbReference type="InterPro" id="IPR036968">
    <property type="entry name" value="Enolpyruvate_Tfrase_sf"/>
</dbReference>
<dbReference type="InterPro" id="IPR006264">
    <property type="entry name" value="EPSP_synthase"/>
</dbReference>
<dbReference type="InterPro" id="IPR023193">
    <property type="entry name" value="EPSP_synthase_CS"/>
</dbReference>
<dbReference type="InterPro" id="IPR013792">
    <property type="entry name" value="RNA3'P_cycl/enolpyr_Trfase_a/b"/>
</dbReference>
<dbReference type="NCBIfam" id="TIGR01356">
    <property type="entry name" value="aroA"/>
    <property type="match status" value="1"/>
</dbReference>
<dbReference type="PANTHER" id="PTHR21090">
    <property type="entry name" value="AROM/DEHYDROQUINATE SYNTHASE"/>
    <property type="match status" value="1"/>
</dbReference>
<dbReference type="PANTHER" id="PTHR21090:SF5">
    <property type="entry name" value="PENTAFUNCTIONAL AROM POLYPEPTIDE"/>
    <property type="match status" value="1"/>
</dbReference>
<dbReference type="Pfam" id="PF00275">
    <property type="entry name" value="EPSP_synthase"/>
    <property type="match status" value="1"/>
</dbReference>
<dbReference type="PIRSF" id="PIRSF000505">
    <property type="entry name" value="EPSPS"/>
    <property type="match status" value="1"/>
</dbReference>
<dbReference type="SUPFAM" id="SSF55205">
    <property type="entry name" value="EPT/RTPC-like"/>
    <property type="match status" value="1"/>
</dbReference>
<dbReference type="PROSITE" id="PS00104">
    <property type="entry name" value="EPSP_SYNTHASE_1"/>
    <property type="match status" value="1"/>
</dbReference>
<dbReference type="PROSITE" id="PS00885">
    <property type="entry name" value="EPSP_SYNTHASE_2"/>
    <property type="match status" value="1"/>
</dbReference>
<evidence type="ECO:0000255" key="1">
    <source>
        <dbReference type="HAMAP-Rule" id="MF_00210"/>
    </source>
</evidence>
<protein>
    <recommendedName>
        <fullName evidence="1">3-phosphoshikimate 1-carboxyvinyltransferase</fullName>
        <ecNumber evidence="1">2.5.1.19</ecNumber>
    </recommendedName>
    <alternativeName>
        <fullName evidence="1">5-enolpyruvylshikimate-3-phosphate synthase</fullName>
        <shortName evidence="1">EPSP synthase</shortName>
        <shortName evidence="1">EPSPS</shortName>
    </alternativeName>
</protein>
<keyword id="KW-0028">Amino-acid biosynthesis</keyword>
<keyword id="KW-0057">Aromatic amino acid biosynthesis</keyword>
<keyword id="KW-0963">Cytoplasm</keyword>
<keyword id="KW-1185">Reference proteome</keyword>
<keyword id="KW-0808">Transferase</keyword>
<comment type="function">
    <text evidence="1">Catalyzes the transfer of the enolpyruvyl moiety of phosphoenolpyruvate (PEP) to the 5-hydroxyl of shikimate-3-phosphate (S3P) to produce enolpyruvyl shikimate-3-phosphate and inorganic phosphate.</text>
</comment>
<comment type="catalytic activity">
    <reaction evidence="1">
        <text>3-phosphoshikimate + phosphoenolpyruvate = 5-O-(1-carboxyvinyl)-3-phosphoshikimate + phosphate</text>
        <dbReference type="Rhea" id="RHEA:21256"/>
        <dbReference type="ChEBI" id="CHEBI:43474"/>
        <dbReference type="ChEBI" id="CHEBI:57701"/>
        <dbReference type="ChEBI" id="CHEBI:58702"/>
        <dbReference type="ChEBI" id="CHEBI:145989"/>
        <dbReference type="EC" id="2.5.1.19"/>
    </reaction>
    <physiologicalReaction direction="left-to-right" evidence="1">
        <dbReference type="Rhea" id="RHEA:21257"/>
    </physiologicalReaction>
</comment>
<comment type="pathway">
    <text evidence="1">Metabolic intermediate biosynthesis; chorismate biosynthesis; chorismate from D-erythrose 4-phosphate and phosphoenolpyruvate: step 6/7.</text>
</comment>
<comment type="subunit">
    <text evidence="1">Monomer.</text>
</comment>
<comment type="subcellular location">
    <subcellularLocation>
        <location evidence="1">Cytoplasm</location>
    </subcellularLocation>
</comment>
<comment type="similarity">
    <text evidence="1">Belongs to the EPSP synthase family.</text>
</comment>
<name>AROA_CAUVN</name>
<proteinExistence type="inferred from homology"/>
<organism>
    <name type="scientific">Caulobacter vibrioides (strain NA1000 / CB15N)</name>
    <name type="common">Caulobacter crescentus</name>
    <dbReference type="NCBI Taxonomy" id="565050"/>
    <lineage>
        <taxon>Bacteria</taxon>
        <taxon>Pseudomonadati</taxon>
        <taxon>Pseudomonadota</taxon>
        <taxon>Alphaproteobacteria</taxon>
        <taxon>Caulobacterales</taxon>
        <taxon>Caulobacteraceae</taxon>
        <taxon>Caulobacter</taxon>
    </lineage>
</organism>
<sequence length="443" mass="46075">MSLAGLKSAPGGALRGIVRAPGDKSISHRSMILGALATGTTTVEGLLEGDDVLATARAMQAFGARIEREGVGRWRIEGKGGFEEPVDVIDCGNAGTGVRLIMGAAAGFAMCATFTGDQSLRGRPMGRVLDPLARMGATWLGRDKGRLPLTLKGGNLRGLNYTLPMASAQVKSAVLLAGLHAEGGVEVIEPEATRDHTERMLRAFGAEVIVEDRKAGDKTFRHVRLPEGQKLTGTHVAVPGDPSSAAFPLVAALIVPGSEVTVEGVMLNELRTGLFTTLQEMGADLVISNVRVASGEEVGDITARYSQLKGVVVPPERAPSMIDEYPILAVAAAFASGETVMRGVGEMRVKESDRISLTANGLKACGVQVVEEPEGFIVTGTGQPPKGGATVVTHGDHRIAMSHLILGMAAQAEVAVDEPGMIATSFPGFADLMRGLGATLAEA</sequence>